<sequence length="115" mass="12214">MELILSAGIGTLTASGVYLLLRPRTYQVIIGLSLLSFAVNLFIFGMGRLRVNAPPILDPGGVGDLARYTDPVPQALVLTAIVIGFAMTALFLVVLLASRGFTGTDHVDGREQRGD</sequence>
<accession>Q52980</accession>
<reference key="1">
    <citation type="journal article" date="1998" name="Mol. Microbiol.">
        <title>The pha gene cluster of Rhizobium meliloti involved in pH adaptation and symbiosis encodes a novel type of K+ efflux system.</title>
        <authorList>
            <person name="Putnoky P."/>
            <person name="Kereszt A."/>
            <person name="Nakamura T."/>
            <person name="Endre G."/>
            <person name="Grosskopf E."/>
            <person name="Kiss P."/>
            <person name="Kondorosi A."/>
        </authorList>
    </citation>
    <scope>NUCLEOTIDE SEQUENCE [GENOMIC DNA]</scope>
    <source>
        <strain>41</strain>
    </source>
</reference>
<reference key="2">
    <citation type="journal article" date="2001" name="Proc. Natl. Acad. Sci. U.S.A.">
        <title>Analysis of the chromosome sequence of the legume symbiont Sinorhizobium meliloti strain 1021.</title>
        <authorList>
            <person name="Capela D."/>
            <person name="Barloy-Hubler F."/>
            <person name="Gouzy J."/>
            <person name="Bothe G."/>
            <person name="Ampe F."/>
            <person name="Batut J."/>
            <person name="Boistard P."/>
            <person name="Becker A."/>
            <person name="Boutry M."/>
            <person name="Cadieu E."/>
            <person name="Dreano S."/>
            <person name="Gloux S."/>
            <person name="Godrie T."/>
            <person name="Goffeau A."/>
            <person name="Kahn D."/>
            <person name="Kiss E."/>
            <person name="Lelaure V."/>
            <person name="Masuy D."/>
            <person name="Pohl T."/>
            <person name="Portetelle D."/>
            <person name="Puehler A."/>
            <person name="Purnelle B."/>
            <person name="Ramsperger U."/>
            <person name="Renard C."/>
            <person name="Thebault P."/>
            <person name="Vandenbol M."/>
            <person name="Weidner S."/>
            <person name="Galibert F."/>
        </authorList>
    </citation>
    <scope>NUCLEOTIDE SEQUENCE [LARGE SCALE GENOMIC DNA]</scope>
    <source>
        <strain>1021</strain>
    </source>
</reference>
<reference key="3">
    <citation type="journal article" date="2001" name="Science">
        <title>The composite genome of the legume symbiont Sinorhizobium meliloti.</title>
        <authorList>
            <person name="Galibert F."/>
            <person name="Finan T.M."/>
            <person name="Long S.R."/>
            <person name="Puehler A."/>
            <person name="Abola P."/>
            <person name="Ampe F."/>
            <person name="Barloy-Hubler F."/>
            <person name="Barnett M.J."/>
            <person name="Becker A."/>
            <person name="Boistard P."/>
            <person name="Bothe G."/>
            <person name="Boutry M."/>
            <person name="Bowser L."/>
            <person name="Buhrmester J."/>
            <person name="Cadieu E."/>
            <person name="Capela D."/>
            <person name="Chain P."/>
            <person name="Cowie A."/>
            <person name="Davis R.W."/>
            <person name="Dreano S."/>
            <person name="Federspiel N.A."/>
            <person name="Fisher R.F."/>
            <person name="Gloux S."/>
            <person name="Godrie T."/>
            <person name="Goffeau A."/>
            <person name="Golding B."/>
            <person name="Gouzy J."/>
            <person name="Gurjal M."/>
            <person name="Hernandez-Lucas I."/>
            <person name="Hong A."/>
            <person name="Huizar L."/>
            <person name="Hyman R.W."/>
            <person name="Jones T."/>
            <person name="Kahn D."/>
            <person name="Kahn M.L."/>
            <person name="Kalman S."/>
            <person name="Keating D.H."/>
            <person name="Kiss E."/>
            <person name="Komp C."/>
            <person name="Lelaure V."/>
            <person name="Masuy D."/>
            <person name="Palm C."/>
            <person name="Peck M.C."/>
            <person name="Pohl T.M."/>
            <person name="Portetelle D."/>
            <person name="Purnelle B."/>
            <person name="Ramsperger U."/>
            <person name="Surzycki R."/>
            <person name="Thebault P."/>
            <person name="Vandenbol M."/>
            <person name="Vorhoelter F.J."/>
            <person name="Weidner S."/>
            <person name="Wells D.H."/>
            <person name="Wong K."/>
            <person name="Yeh K.-C."/>
            <person name="Batut J."/>
        </authorList>
    </citation>
    <scope>NUCLEOTIDE SEQUENCE [LARGE SCALE GENOMIC DNA]</scope>
    <source>
        <strain>1021</strain>
    </source>
</reference>
<feature type="chain" id="PRO_0000089156" description="Probable K(+)/H(+) antiporter subunit C">
    <location>
        <begin position="1"/>
        <end position="115"/>
    </location>
</feature>
<feature type="transmembrane region" description="Helical" evidence="1">
    <location>
        <begin position="4"/>
        <end position="21"/>
    </location>
</feature>
<feature type="transmembrane region" description="Helical" evidence="1">
    <location>
        <begin position="28"/>
        <end position="47"/>
    </location>
</feature>
<feature type="transmembrane region" description="Helical" evidence="1">
    <location>
        <begin position="75"/>
        <end position="97"/>
    </location>
</feature>
<comment type="function">
    <text>Part of a K(+) efflux system which is required for the adaptation of R.meliloti to alkaline pH as well as for the infection process during symbiotic nodule development.</text>
</comment>
<comment type="subunit">
    <text>May form a hetero-oligomeric complex that consists of six subunits: PhaAB, PhaC, PhaD, PhaE, PhaF and PhaG.</text>
</comment>
<comment type="subcellular location">
    <subcellularLocation>
        <location evidence="2">Cell membrane</location>
        <topology evidence="2">Multi-pass membrane protein</topology>
    </subcellularLocation>
</comment>
<comment type="similarity">
    <text evidence="2">Belongs to the CPA3 antiporters (TC 2.A.63) subunit C family.</text>
</comment>
<evidence type="ECO:0000255" key="1"/>
<evidence type="ECO:0000305" key="2"/>
<keyword id="KW-0050">Antiport</keyword>
<keyword id="KW-1003">Cell membrane</keyword>
<keyword id="KW-0375">Hydrogen ion transport</keyword>
<keyword id="KW-0406">Ion transport</keyword>
<keyword id="KW-0472">Membrane</keyword>
<keyword id="KW-0630">Potassium</keyword>
<keyword id="KW-0633">Potassium transport</keyword>
<keyword id="KW-1185">Reference proteome</keyword>
<keyword id="KW-0812">Transmembrane</keyword>
<keyword id="KW-1133">Transmembrane helix</keyword>
<keyword id="KW-0813">Transport</keyword>
<name>PHAC1_RHIME</name>
<gene>
    <name type="primary">phaC</name>
    <name type="synonym">phaC1</name>
    <name type="ordered locus">R02911</name>
    <name type="ORF">SMc03180</name>
</gene>
<proteinExistence type="inferred from homology"/>
<organism>
    <name type="scientific">Rhizobium meliloti (strain 1021)</name>
    <name type="common">Ensifer meliloti</name>
    <name type="synonym">Sinorhizobium meliloti</name>
    <dbReference type="NCBI Taxonomy" id="266834"/>
    <lineage>
        <taxon>Bacteria</taxon>
        <taxon>Pseudomonadati</taxon>
        <taxon>Pseudomonadota</taxon>
        <taxon>Alphaproteobacteria</taxon>
        <taxon>Hyphomicrobiales</taxon>
        <taxon>Rhizobiaceae</taxon>
        <taxon>Sinorhizobium/Ensifer group</taxon>
        <taxon>Sinorhizobium</taxon>
    </lineage>
</organism>
<dbReference type="EMBL" id="X93358">
    <property type="protein sequence ID" value="CAA63736.1"/>
    <property type="molecule type" value="Genomic_DNA"/>
</dbReference>
<dbReference type="EMBL" id="AL591688">
    <property type="protein sequence ID" value="CAC47490.1"/>
    <property type="molecule type" value="Genomic_DNA"/>
</dbReference>
<dbReference type="RefSeq" id="NP_387017.1">
    <property type="nucleotide sequence ID" value="NC_003047.1"/>
</dbReference>
<dbReference type="RefSeq" id="WP_003528841.1">
    <property type="nucleotide sequence ID" value="NC_003047.1"/>
</dbReference>
<dbReference type="SMR" id="Q52980"/>
<dbReference type="TCDB" id="2.A.63.1.1">
    <property type="family name" value="the monovalent cation (k(+) or na(+)):proton antiporter-3 (cpa3) family"/>
</dbReference>
<dbReference type="EnsemblBacteria" id="CAC47490">
    <property type="protein sequence ID" value="CAC47490"/>
    <property type="gene ID" value="SMc03180"/>
</dbReference>
<dbReference type="KEGG" id="sme:SMc03180"/>
<dbReference type="PATRIC" id="fig|266834.11.peg.4432"/>
<dbReference type="eggNOG" id="COG1006">
    <property type="taxonomic scope" value="Bacteria"/>
</dbReference>
<dbReference type="HOGENOM" id="CLU_082058_3_0_5"/>
<dbReference type="OrthoDB" id="9799219at2"/>
<dbReference type="Proteomes" id="UP000001976">
    <property type="component" value="Chromosome"/>
</dbReference>
<dbReference type="GO" id="GO:0005886">
    <property type="term" value="C:plasma membrane"/>
    <property type="evidence" value="ECO:0007669"/>
    <property type="project" value="UniProtKB-SubCell"/>
</dbReference>
<dbReference type="GO" id="GO:0015297">
    <property type="term" value="F:antiporter activity"/>
    <property type="evidence" value="ECO:0007669"/>
    <property type="project" value="UniProtKB-KW"/>
</dbReference>
<dbReference type="GO" id="GO:0008324">
    <property type="term" value="F:monoatomic cation transmembrane transporter activity"/>
    <property type="evidence" value="ECO:0007669"/>
    <property type="project" value="InterPro"/>
</dbReference>
<dbReference type="GO" id="GO:0006813">
    <property type="term" value="P:potassium ion transport"/>
    <property type="evidence" value="ECO:0007669"/>
    <property type="project" value="UniProtKB-KW"/>
</dbReference>
<dbReference type="GO" id="GO:1902600">
    <property type="term" value="P:proton transmembrane transport"/>
    <property type="evidence" value="ECO:0007669"/>
    <property type="project" value="UniProtKB-KW"/>
</dbReference>
<dbReference type="Gene3D" id="1.10.287.3510">
    <property type="match status" value="1"/>
</dbReference>
<dbReference type="InterPro" id="IPR050601">
    <property type="entry name" value="CPA3_antiporter_subunitC"/>
</dbReference>
<dbReference type="InterPro" id="IPR006673">
    <property type="entry name" value="Mnh_C1_su"/>
</dbReference>
<dbReference type="InterPro" id="IPR039428">
    <property type="entry name" value="NUOK/Mnh_C1-like"/>
</dbReference>
<dbReference type="NCBIfam" id="TIGR00941">
    <property type="entry name" value="2a6301s03"/>
    <property type="match status" value="1"/>
</dbReference>
<dbReference type="NCBIfam" id="NF006573">
    <property type="entry name" value="PRK09094.1"/>
    <property type="match status" value="1"/>
</dbReference>
<dbReference type="PANTHER" id="PTHR34583">
    <property type="entry name" value="ANTIPORTER SUBUNIT MNHC2-RELATED"/>
    <property type="match status" value="1"/>
</dbReference>
<dbReference type="PANTHER" id="PTHR34583:SF2">
    <property type="entry name" value="ANTIPORTER SUBUNIT MNHC2-RELATED"/>
    <property type="match status" value="1"/>
</dbReference>
<dbReference type="Pfam" id="PF00420">
    <property type="entry name" value="Oxidored_q2"/>
    <property type="match status" value="1"/>
</dbReference>
<protein>
    <recommendedName>
        <fullName>Probable K(+)/H(+) antiporter subunit C</fullName>
    </recommendedName>
    <alternativeName>
        <fullName>pH adaptation potassium efflux system protein C</fullName>
        <shortName>Pha system subunit C</shortName>
    </alternativeName>
</protein>